<proteinExistence type="evidence at protein level"/>
<keyword id="KW-0108">Calcium channel impairing toxin</keyword>
<keyword id="KW-0903">Direct protein sequencing</keyword>
<keyword id="KW-1015">Disulfide bond</keyword>
<keyword id="KW-0872">Ion channel impairing toxin</keyword>
<keyword id="KW-0528">Neurotoxin</keyword>
<keyword id="KW-0964">Secreted</keyword>
<keyword id="KW-0732">Signal</keyword>
<keyword id="KW-0800">Toxin</keyword>
<feature type="signal peptide" evidence="3">
    <location>
        <begin position="1"/>
        <end position="19"/>
    </location>
</feature>
<feature type="chain" id="PRO_0000006288" description="Cysteine-rich venom protein">
    <location>
        <begin position="20"/>
        <end position="240"/>
    </location>
</feature>
<feature type="domain" description="SCP">
    <location>
        <begin position="39"/>
        <end position="166"/>
    </location>
</feature>
<feature type="domain" description="ShKT" evidence="2">
    <location>
        <begin position="202"/>
        <end position="235"/>
    </location>
</feature>
<feature type="disulfide bond" evidence="2">
    <location>
        <begin position="75"/>
        <end position="153"/>
    </location>
</feature>
<feature type="disulfide bond" evidence="2">
    <location>
        <begin position="92"/>
        <end position="167"/>
    </location>
</feature>
<feature type="disulfide bond" evidence="2">
    <location>
        <begin position="148"/>
        <end position="164"/>
    </location>
</feature>
<feature type="disulfide bond" evidence="2">
    <location>
        <begin position="186"/>
        <end position="193"/>
    </location>
</feature>
<feature type="disulfide bond" evidence="2">
    <location>
        <begin position="189"/>
        <end position="198"/>
    </location>
</feature>
<feature type="disulfide bond" evidence="2">
    <location>
        <begin position="202"/>
        <end position="235"/>
    </location>
</feature>
<feature type="disulfide bond" evidence="2">
    <location>
        <begin position="211"/>
        <end position="229"/>
    </location>
</feature>
<feature type="disulfide bond" evidence="2">
    <location>
        <begin position="220"/>
        <end position="233"/>
    </location>
</feature>
<organism>
    <name type="scientific">Protobothrops jerdonii</name>
    <name type="common">Jerdon's pitviper</name>
    <name type="synonym">Trimeresurus jerdonii</name>
    <dbReference type="NCBI Taxonomy" id="242841"/>
    <lineage>
        <taxon>Eukaryota</taxon>
        <taxon>Metazoa</taxon>
        <taxon>Chordata</taxon>
        <taxon>Craniata</taxon>
        <taxon>Vertebrata</taxon>
        <taxon>Euteleostomi</taxon>
        <taxon>Lepidosauria</taxon>
        <taxon>Squamata</taxon>
        <taxon>Bifurcata</taxon>
        <taxon>Unidentata</taxon>
        <taxon>Episquamata</taxon>
        <taxon>Toxicofera</taxon>
        <taxon>Serpentes</taxon>
        <taxon>Colubroidea</taxon>
        <taxon>Viperidae</taxon>
        <taxon>Crotalinae</taxon>
        <taxon>Protobothrops</taxon>
    </lineage>
</organism>
<evidence type="ECO:0000250" key="1"/>
<evidence type="ECO:0000255" key="2">
    <source>
        <dbReference type="PROSITE-ProRule" id="PRU01005"/>
    </source>
</evidence>
<evidence type="ECO:0000269" key="3">
    <source>
    </source>
</evidence>
<evidence type="ECO:0000305" key="4"/>
<name>CRVP_PROJR</name>
<sequence length="240" mass="26865">MIAFIVLPILAAVLQQSSGNVDFDSESPRKPEIQNEIIDLHNSLRRSVNPTASNMLKMEWYPEAAANAERWAYGCIESHSSRDSRVIEGIKCGENIYMSPYPMKWTDIIHAWHGEYKDFKYGVGAVPSDAVVGHYTQIVWYKSYRIGCAAAYCPSAEYSYFYVCQYCPAGNMIGKTATPYTSGPPCGDCPSDCDNGLCTNPCRQENKFTNCDSLVRQSSCQDNYMKTNCPASCFCHNEII</sequence>
<accession>Q7ZZN9</accession>
<comment type="function">
    <text evidence="1">Blocks contraction of smooth muscle elicited by high potassium-induced depolarization, but does not block caffeine-stimulated contraction. May target voltage-gated calcium channels on smooth muscle (By similarity).</text>
</comment>
<comment type="subcellular location">
    <subcellularLocation>
        <location>Secreted</location>
    </subcellularLocation>
</comment>
<comment type="tissue specificity">
    <text>Expressed by the venom gland.</text>
</comment>
<comment type="similarity">
    <text evidence="4">Belongs to the CRISP family.</text>
</comment>
<reference key="1">
    <citation type="journal article" date="2003" name="Toxicon">
        <title>Purification and cloning of cysteine-rich proteins from Trimeresurus jerdonii and Naja atra venoms.</title>
        <authorList>
            <person name="Jin Y."/>
            <person name="Lu Q."/>
            <person name="Zhou X."/>
            <person name="Zhu S."/>
            <person name="Li R."/>
            <person name="Wang W."/>
            <person name="Xiong Y."/>
        </authorList>
    </citation>
    <scope>NUCLEOTIDE SEQUENCE [MRNA]</scope>
    <scope>PROTEIN SEQUENCE OF 20-57</scope>
    <source>
        <tissue>Venom</tissue>
        <tissue>Venom gland</tissue>
    </source>
</reference>
<protein>
    <recommendedName>
        <fullName>Cysteine-rich venom protein</fullName>
        <shortName>TJ-CRVP</shortName>
    </recommendedName>
</protein>
<dbReference type="EMBL" id="AY261467">
    <property type="protein sequence ID" value="AAP20602.1"/>
    <property type="molecule type" value="mRNA"/>
</dbReference>
<dbReference type="SMR" id="Q7ZZN9"/>
<dbReference type="GO" id="GO:0005576">
    <property type="term" value="C:extracellular region"/>
    <property type="evidence" value="ECO:0007669"/>
    <property type="project" value="UniProtKB-SubCell"/>
</dbReference>
<dbReference type="GO" id="GO:0005246">
    <property type="term" value="F:calcium channel regulator activity"/>
    <property type="evidence" value="ECO:0007669"/>
    <property type="project" value="UniProtKB-KW"/>
</dbReference>
<dbReference type="GO" id="GO:0090729">
    <property type="term" value="F:toxin activity"/>
    <property type="evidence" value="ECO:0007669"/>
    <property type="project" value="UniProtKB-KW"/>
</dbReference>
<dbReference type="CDD" id="cd05383">
    <property type="entry name" value="CAP_CRISP"/>
    <property type="match status" value="1"/>
</dbReference>
<dbReference type="FunFam" id="1.10.10.740:FF:000001">
    <property type="entry name" value="Cysteine-rich secretory protein 2"/>
    <property type="match status" value="1"/>
</dbReference>
<dbReference type="FunFam" id="3.40.33.10:FF:000005">
    <property type="entry name" value="Cysteine-rich secretory protein 2"/>
    <property type="match status" value="1"/>
</dbReference>
<dbReference type="Gene3D" id="3.40.33.10">
    <property type="entry name" value="CAP"/>
    <property type="match status" value="1"/>
</dbReference>
<dbReference type="Gene3D" id="1.10.10.740">
    <property type="entry name" value="Crisp domain"/>
    <property type="match status" value="1"/>
</dbReference>
<dbReference type="InterPro" id="IPR018244">
    <property type="entry name" value="Allrgn_V5/Tpx1_CS"/>
</dbReference>
<dbReference type="InterPro" id="IPR014044">
    <property type="entry name" value="CAP_dom"/>
</dbReference>
<dbReference type="InterPro" id="IPR035940">
    <property type="entry name" value="CAP_sf"/>
</dbReference>
<dbReference type="InterPro" id="IPR042076">
    <property type="entry name" value="Crisp-like_dom"/>
</dbReference>
<dbReference type="InterPro" id="IPR001283">
    <property type="entry name" value="CRISP-related"/>
</dbReference>
<dbReference type="InterPro" id="IPR013871">
    <property type="entry name" value="Cysteine_rich_secretory"/>
</dbReference>
<dbReference type="InterPro" id="IPR034117">
    <property type="entry name" value="SCP_CRISP"/>
</dbReference>
<dbReference type="InterPro" id="IPR003582">
    <property type="entry name" value="ShKT_dom"/>
</dbReference>
<dbReference type="InterPro" id="IPR002413">
    <property type="entry name" value="V5_allergen-like"/>
</dbReference>
<dbReference type="PANTHER" id="PTHR10334">
    <property type="entry name" value="CYSTEINE-RICH SECRETORY PROTEIN-RELATED"/>
    <property type="match status" value="1"/>
</dbReference>
<dbReference type="Pfam" id="PF00188">
    <property type="entry name" value="CAP"/>
    <property type="match status" value="1"/>
</dbReference>
<dbReference type="Pfam" id="PF08562">
    <property type="entry name" value="Crisp"/>
    <property type="match status" value="1"/>
</dbReference>
<dbReference type="PRINTS" id="PR00838">
    <property type="entry name" value="V5ALLERGEN"/>
</dbReference>
<dbReference type="PRINTS" id="PR00837">
    <property type="entry name" value="V5TPXLIKE"/>
</dbReference>
<dbReference type="SMART" id="SM00198">
    <property type="entry name" value="SCP"/>
    <property type="match status" value="1"/>
</dbReference>
<dbReference type="SUPFAM" id="SSF57546">
    <property type="entry name" value="Crisp domain-like"/>
    <property type="match status" value="1"/>
</dbReference>
<dbReference type="SUPFAM" id="SSF55797">
    <property type="entry name" value="PR-1-like"/>
    <property type="match status" value="1"/>
</dbReference>
<dbReference type="PROSITE" id="PS01009">
    <property type="entry name" value="CRISP_1"/>
    <property type="match status" value="1"/>
</dbReference>
<dbReference type="PROSITE" id="PS01010">
    <property type="entry name" value="CRISP_2"/>
    <property type="match status" value="1"/>
</dbReference>
<dbReference type="PROSITE" id="PS51670">
    <property type="entry name" value="SHKT"/>
    <property type="match status" value="1"/>
</dbReference>